<gene>
    <name type="ordered locus">XOO0224</name>
</gene>
<comment type="similarity">
    <text evidence="1">Belongs to the UPF0502 family.</text>
</comment>
<evidence type="ECO:0000255" key="1">
    <source>
        <dbReference type="HAMAP-Rule" id="MF_01584"/>
    </source>
</evidence>
<proteinExistence type="inferred from homology"/>
<organism>
    <name type="scientific">Xanthomonas oryzae pv. oryzae (strain MAFF 311018)</name>
    <dbReference type="NCBI Taxonomy" id="342109"/>
    <lineage>
        <taxon>Bacteria</taxon>
        <taxon>Pseudomonadati</taxon>
        <taxon>Pseudomonadota</taxon>
        <taxon>Gammaproteobacteria</taxon>
        <taxon>Lysobacterales</taxon>
        <taxon>Lysobacteraceae</taxon>
        <taxon>Xanthomonas</taxon>
    </lineage>
</organism>
<sequence length="221" mass="23973">MTETSPTPVLDTAQARVLGCLIEKEATTPDAYPLTVNAAQVAANQKTAREPVLNLQTGVVHHALRQLENLGLVRQQFCSRAERYEHRLGSVLDLTRQQVALIGLLLRGPQTLGELYARSERLARFADTDDVRHHLDRLIQRGLAAQLPRASGQREDRYAHLLSGELDVEALQAATARAAQGARSGSDTSELEARVQSLEATVADMQDALAALQARLNAAGA</sequence>
<dbReference type="EMBL" id="AP008229">
    <property type="protein sequence ID" value="BAE66979.1"/>
    <property type="molecule type" value="Genomic_DNA"/>
</dbReference>
<dbReference type="RefSeq" id="WP_011407298.1">
    <property type="nucleotide sequence ID" value="NC_007705.1"/>
</dbReference>
<dbReference type="SMR" id="Q2P8Z8"/>
<dbReference type="KEGG" id="xom:XOO0224"/>
<dbReference type="HOGENOM" id="CLU_057831_2_0_6"/>
<dbReference type="Gene3D" id="1.10.10.10">
    <property type="entry name" value="Winged helix-like DNA-binding domain superfamily/Winged helix DNA-binding domain"/>
    <property type="match status" value="2"/>
</dbReference>
<dbReference type="HAMAP" id="MF_01584">
    <property type="entry name" value="UPF0502"/>
    <property type="match status" value="1"/>
</dbReference>
<dbReference type="InterPro" id="IPR007432">
    <property type="entry name" value="DUF480"/>
</dbReference>
<dbReference type="InterPro" id="IPR036388">
    <property type="entry name" value="WH-like_DNA-bd_sf"/>
</dbReference>
<dbReference type="InterPro" id="IPR036390">
    <property type="entry name" value="WH_DNA-bd_sf"/>
</dbReference>
<dbReference type="PANTHER" id="PTHR38768">
    <property type="entry name" value="UPF0502 PROTEIN YCEH"/>
    <property type="match status" value="1"/>
</dbReference>
<dbReference type="PANTHER" id="PTHR38768:SF1">
    <property type="entry name" value="UPF0502 PROTEIN YCEH"/>
    <property type="match status" value="1"/>
</dbReference>
<dbReference type="Pfam" id="PF04337">
    <property type="entry name" value="DUF480"/>
    <property type="match status" value="1"/>
</dbReference>
<dbReference type="SUPFAM" id="SSF46785">
    <property type="entry name" value="Winged helix' DNA-binding domain"/>
    <property type="match status" value="2"/>
</dbReference>
<name>Y224_XANOM</name>
<feature type="chain" id="PRO_0000309449" description="UPF0502 protein XOO0224">
    <location>
        <begin position="1"/>
        <end position="221"/>
    </location>
</feature>
<protein>
    <recommendedName>
        <fullName evidence="1">UPF0502 protein XOO0224</fullName>
    </recommendedName>
</protein>
<reference key="1">
    <citation type="journal article" date="2005" name="Jpn. Agric. Res. Q.">
        <title>Genome sequence of Xanthomonas oryzae pv. oryzae suggests contribution of large numbers of effector genes and insertion sequences to its race diversity.</title>
        <authorList>
            <person name="Ochiai H."/>
            <person name="Inoue Y."/>
            <person name="Takeya M."/>
            <person name="Sasaki A."/>
            <person name="Kaku H."/>
        </authorList>
    </citation>
    <scope>NUCLEOTIDE SEQUENCE [LARGE SCALE GENOMIC DNA]</scope>
    <source>
        <strain>MAFF 311018</strain>
    </source>
</reference>
<accession>Q2P8Z8</accession>